<proteinExistence type="evidence at transcript level"/>
<sequence length="240" mass="26598">MASARNLLLLSSSRLHGHGYLEHARGQLEDLFKSANVKTVLFVPYALRDHDKYTATVRDALQPWGFNVEGLHTKPDREQALREAQAIFVGGGNTFVLLRSLYEMKLLDPIRELVLQRGLPYVGSSAGTNVATRSIHTTNDMPVAYPPSFEALALVPFNINPHYLDPEAGSRHKGETRDERLEEFVAYHGLPVLGLREGTSVRVQGEKAILLGDRNAKLFKADGGTEELAPLADLTFLLQK</sequence>
<evidence type="ECO:0000250" key="1"/>
<evidence type="ECO:0000305" key="2"/>
<dbReference type="EC" id="3.4.13.21"/>
<dbReference type="EMBL" id="AE014298">
    <property type="protein sequence ID" value="AAF48224.1"/>
    <property type="molecule type" value="Genomic_DNA"/>
</dbReference>
<dbReference type="EMBL" id="AY118855">
    <property type="protein sequence ID" value="AAM50715.1"/>
    <property type="molecule type" value="mRNA"/>
</dbReference>
<dbReference type="RefSeq" id="NP_001285183.1">
    <property type="nucleotide sequence ID" value="NM_001298254.1"/>
</dbReference>
<dbReference type="RefSeq" id="NP_572852.1">
    <property type="nucleotide sequence ID" value="NM_132624.2"/>
</dbReference>
<dbReference type="SMR" id="Q9VYH3"/>
<dbReference type="BioGRID" id="58644">
    <property type="interactions" value="3"/>
</dbReference>
<dbReference type="DIP" id="DIP-21896N"/>
<dbReference type="FunCoup" id="Q9VYH3">
    <property type="interactions" value="7"/>
</dbReference>
<dbReference type="IntAct" id="Q9VYH3">
    <property type="interactions" value="11"/>
</dbReference>
<dbReference type="STRING" id="7227.FBpp0309262"/>
<dbReference type="MEROPS" id="S51.002"/>
<dbReference type="PaxDb" id="7227-FBpp0073552"/>
<dbReference type="DNASU" id="32258"/>
<dbReference type="EnsemblMetazoa" id="FBtr0073721">
    <property type="protein sequence ID" value="FBpp0073552"/>
    <property type="gene ID" value="FBgn0030447"/>
</dbReference>
<dbReference type="EnsemblMetazoa" id="FBtr0340301">
    <property type="protein sequence ID" value="FBpp0309262"/>
    <property type="gene ID" value="FBgn0030447"/>
</dbReference>
<dbReference type="GeneID" id="32258"/>
<dbReference type="KEGG" id="dme:Dmel_CG2200"/>
<dbReference type="UCSC" id="CG2200-RA">
    <property type="organism name" value="d. melanogaster"/>
</dbReference>
<dbReference type="AGR" id="FB:FBgn0030447"/>
<dbReference type="FlyBase" id="FBgn0030447">
    <property type="gene designation" value="CG2200"/>
</dbReference>
<dbReference type="VEuPathDB" id="VectorBase:FBgn0030447"/>
<dbReference type="eggNOG" id="ENOG502QR7X">
    <property type="taxonomic scope" value="Eukaryota"/>
</dbReference>
<dbReference type="HOGENOM" id="CLU_071689_0_0_1"/>
<dbReference type="InParanoid" id="Q9VYH3"/>
<dbReference type="OMA" id="PWGYAVE"/>
<dbReference type="OrthoDB" id="10052168at2759"/>
<dbReference type="PhylomeDB" id="Q9VYH3"/>
<dbReference type="BioGRID-ORCS" id="32258">
    <property type="hits" value="0 hits in 1 CRISPR screen"/>
</dbReference>
<dbReference type="GenomeRNAi" id="32258"/>
<dbReference type="PRO" id="PR:Q9VYH3"/>
<dbReference type="Proteomes" id="UP000000803">
    <property type="component" value="Chromosome X"/>
</dbReference>
<dbReference type="Bgee" id="FBgn0030447">
    <property type="expression patterns" value="Expressed in adult posterior midgut class II enteroendocrine cell in adult midgut (Drosophila) and 81 other cell types or tissues"/>
</dbReference>
<dbReference type="ExpressionAtlas" id="Q9VYH3">
    <property type="expression patterns" value="baseline and differential"/>
</dbReference>
<dbReference type="GO" id="GO:0005737">
    <property type="term" value="C:cytoplasm"/>
    <property type="evidence" value="ECO:0007669"/>
    <property type="project" value="UniProtKB-SubCell"/>
</dbReference>
<dbReference type="GO" id="GO:0016805">
    <property type="term" value="F:dipeptidase activity"/>
    <property type="evidence" value="ECO:0007669"/>
    <property type="project" value="UniProtKB-KW"/>
</dbReference>
<dbReference type="GO" id="GO:0017171">
    <property type="term" value="F:serine hydrolase activity"/>
    <property type="evidence" value="ECO:0007005"/>
    <property type="project" value="FlyBase"/>
</dbReference>
<dbReference type="GO" id="GO:0008236">
    <property type="term" value="F:serine-type peptidase activity"/>
    <property type="evidence" value="ECO:0007669"/>
    <property type="project" value="UniProtKB-KW"/>
</dbReference>
<dbReference type="GO" id="GO:0006508">
    <property type="term" value="P:proteolysis"/>
    <property type="evidence" value="ECO:0007669"/>
    <property type="project" value="UniProtKB-KW"/>
</dbReference>
<dbReference type="CDD" id="cd03146">
    <property type="entry name" value="GAT1_Peptidase_E"/>
    <property type="match status" value="1"/>
</dbReference>
<dbReference type="FunFam" id="3.40.50.880:FF:000007">
    <property type="entry name" value="Peptidase E"/>
    <property type="match status" value="1"/>
</dbReference>
<dbReference type="Gene3D" id="3.40.50.880">
    <property type="match status" value="1"/>
</dbReference>
<dbReference type="InterPro" id="IPR029062">
    <property type="entry name" value="Class_I_gatase-like"/>
</dbReference>
<dbReference type="InterPro" id="IPR005320">
    <property type="entry name" value="Peptidase_S51"/>
</dbReference>
<dbReference type="NCBIfam" id="NF003642">
    <property type="entry name" value="PRK05282.1"/>
    <property type="match status" value="1"/>
</dbReference>
<dbReference type="PANTHER" id="PTHR20842:SF0">
    <property type="entry name" value="ALPHA-ASPARTYL DIPEPTIDASE"/>
    <property type="match status" value="1"/>
</dbReference>
<dbReference type="PANTHER" id="PTHR20842">
    <property type="entry name" value="PROTEASE S51 ALPHA-ASPARTYL DIPEPTIDASE"/>
    <property type="match status" value="1"/>
</dbReference>
<dbReference type="Pfam" id="PF03575">
    <property type="entry name" value="Peptidase_S51"/>
    <property type="match status" value="1"/>
</dbReference>
<dbReference type="SUPFAM" id="SSF52317">
    <property type="entry name" value="Class I glutamine amidotransferase-like"/>
    <property type="match status" value="1"/>
</dbReference>
<name>PEPE_DROME</name>
<organism>
    <name type="scientific">Drosophila melanogaster</name>
    <name type="common">Fruit fly</name>
    <dbReference type="NCBI Taxonomy" id="7227"/>
    <lineage>
        <taxon>Eukaryota</taxon>
        <taxon>Metazoa</taxon>
        <taxon>Ecdysozoa</taxon>
        <taxon>Arthropoda</taxon>
        <taxon>Hexapoda</taxon>
        <taxon>Insecta</taxon>
        <taxon>Pterygota</taxon>
        <taxon>Neoptera</taxon>
        <taxon>Endopterygota</taxon>
        <taxon>Diptera</taxon>
        <taxon>Brachycera</taxon>
        <taxon>Muscomorpha</taxon>
        <taxon>Ephydroidea</taxon>
        <taxon>Drosophilidae</taxon>
        <taxon>Drosophila</taxon>
        <taxon>Sophophora</taxon>
    </lineage>
</organism>
<gene>
    <name type="ORF">CG2200</name>
</gene>
<reference key="1">
    <citation type="journal article" date="2000" name="Science">
        <title>The genome sequence of Drosophila melanogaster.</title>
        <authorList>
            <person name="Adams M.D."/>
            <person name="Celniker S.E."/>
            <person name="Holt R.A."/>
            <person name="Evans C.A."/>
            <person name="Gocayne J.D."/>
            <person name="Amanatides P.G."/>
            <person name="Scherer S.E."/>
            <person name="Li P.W."/>
            <person name="Hoskins R.A."/>
            <person name="Galle R.F."/>
            <person name="George R.A."/>
            <person name="Lewis S.E."/>
            <person name="Richards S."/>
            <person name="Ashburner M."/>
            <person name="Henderson S.N."/>
            <person name="Sutton G.G."/>
            <person name="Wortman J.R."/>
            <person name="Yandell M.D."/>
            <person name="Zhang Q."/>
            <person name="Chen L.X."/>
            <person name="Brandon R.C."/>
            <person name="Rogers Y.-H.C."/>
            <person name="Blazej R.G."/>
            <person name="Champe M."/>
            <person name="Pfeiffer B.D."/>
            <person name="Wan K.H."/>
            <person name="Doyle C."/>
            <person name="Baxter E.G."/>
            <person name="Helt G."/>
            <person name="Nelson C.R."/>
            <person name="Miklos G.L.G."/>
            <person name="Abril J.F."/>
            <person name="Agbayani A."/>
            <person name="An H.-J."/>
            <person name="Andrews-Pfannkoch C."/>
            <person name="Baldwin D."/>
            <person name="Ballew R.M."/>
            <person name="Basu A."/>
            <person name="Baxendale J."/>
            <person name="Bayraktaroglu L."/>
            <person name="Beasley E.M."/>
            <person name="Beeson K.Y."/>
            <person name="Benos P.V."/>
            <person name="Berman B.P."/>
            <person name="Bhandari D."/>
            <person name="Bolshakov S."/>
            <person name="Borkova D."/>
            <person name="Botchan M.R."/>
            <person name="Bouck J."/>
            <person name="Brokstein P."/>
            <person name="Brottier P."/>
            <person name="Burtis K.C."/>
            <person name="Busam D.A."/>
            <person name="Butler H."/>
            <person name="Cadieu E."/>
            <person name="Center A."/>
            <person name="Chandra I."/>
            <person name="Cherry J.M."/>
            <person name="Cawley S."/>
            <person name="Dahlke C."/>
            <person name="Davenport L.B."/>
            <person name="Davies P."/>
            <person name="de Pablos B."/>
            <person name="Delcher A."/>
            <person name="Deng Z."/>
            <person name="Mays A.D."/>
            <person name="Dew I."/>
            <person name="Dietz S.M."/>
            <person name="Dodson K."/>
            <person name="Doup L.E."/>
            <person name="Downes M."/>
            <person name="Dugan-Rocha S."/>
            <person name="Dunkov B.C."/>
            <person name="Dunn P."/>
            <person name="Durbin K.J."/>
            <person name="Evangelista C.C."/>
            <person name="Ferraz C."/>
            <person name="Ferriera S."/>
            <person name="Fleischmann W."/>
            <person name="Fosler C."/>
            <person name="Gabrielian A.E."/>
            <person name="Garg N.S."/>
            <person name="Gelbart W.M."/>
            <person name="Glasser K."/>
            <person name="Glodek A."/>
            <person name="Gong F."/>
            <person name="Gorrell J.H."/>
            <person name="Gu Z."/>
            <person name="Guan P."/>
            <person name="Harris M."/>
            <person name="Harris N.L."/>
            <person name="Harvey D.A."/>
            <person name="Heiman T.J."/>
            <person name="Hernandez J.R."/>
            <person name="Houck J."/>
            <person name="Hostin D."/>
            <person name="Houston K.A."/>
            <person name="Howland T.J."/>
            <person name="Wei M.-H."/>
            <person name="Ibegwam C."/>
            <person name="Jalali M."/>
            <person name="Kalush F."/>
            <person name="Karpen G.H."/>
            <person name="Ke Z."/>
            <person name="Kennison J.A."/>
            <person name="Ketchum K.A."/>
            <person name="Kimmel B.E."/>
            <person name="Kodira C.D."/>
            <person name="Kraft C.L."/>
            <person name="Kravitz S."/>
            <person name="Kulp D."/>
            <person name="Lai Z."/>
            <person name="Lasko P."/>
            <person name="Lei Y."/>
            <person name="Levitsky A.A."/>
            <person name="Li J.H."/>
            <person name="Li Z."/>
            <person name="Liang Y."/>
            <person name="Lin X."/>
            <person name="Liu X."/>
            <person name="Mattei B."/>
            <person name="McIntosh T.C."/>
            <person name="McLeod M.P."/>
            <person name="McPherson D."/>
            <person name="Merkulov G."/>
            <person name="Milshina N.V."/>
            <person name="Mobarry C."/>
            <person name="Morris J."/>
            <person name="Moshrefi A."/>
            <person name="Mount S.M."/>
            <person name="Moy M."/>
            <person name="Murphy B."/>
            <person name="Murphy L."/>
            <person name="Muzny D.M."/>
            <person name="Nelson D.L."/>
            <person name="Nelson D.R."/>
            <person name="Nelson K.A."/>
            <person name="Nixon K."/>
            <person name="Nusskern D.R."/>
            <person name="Pacleb J.M."/>
            <person name="Palazzolo M."/>
            <person name="Pittman G.S."/>
            <person name="Pan S."/>
            <person name="Pollard J."/>
            <person name="Puri V."/>
            <person name="Reese M.G."/>
            <person name="Reinert K."/>
            <person name="Remington K."/>
            <person name="Saunders R.D.C."/>
            <person name="Scheeler F."/>
            <person name="Shen H."/>
            <person name="Shue B.C."/>
            <person name="Siden-Kiamos I."/>
            <person name="Simpson M."/>
            <person name="Skupski M.P."/>
            <person name="Smith T.J."/>
            <person name="Spier E."/>
            <person name="Spradling A.C."/>
            <person name="Stapleton M."/>
            <person name="Strong R."/>
            <person name="Sun E."/>
            <person name="Svirskas R."/>
            <person name="Tector C."/>
            <person name="Turner R."/>
            <person name="Venter E."/>
            <person name="Wang A.H."/>
            <person name="Wang X."/>
            <person name="Wang Z.-Y."/>
            <person name="Wassarman D.A."/>
            <person name="Weinstock G.M."/>
            <person name="Weissenbach J."/>
            <person name="Williams S.M."/>
            <person name="Woodage T."/>
            <person name="Worley K.C."/>
            <person name="Wu D."/>
            <person name="Yang S."/>
            <person name="Yao Q.A."/>
            <person name="Ye J."/>
            <person name="Yeh R.-F."/>
            <person name="Zaveri J.S."/>
            <person name="Zhan M."/>
            <person name="Zhang G."/>
            <person name="Zhao Q."/>
            <person name="Zheng L."/>
            <person name="Zheng X.H."/>
            <person name="Zhong F.N."/>
            <person name="Zhong W."/>
            <person name="Zhou X."/>
            <person name="Zhu S.C."/>
            <person name="Zhu X."/>
            <person name="Smith H.O."/>
            <person name="Gibbs R.A."/>
            <person name="Myers E.W."/>
            <person name="Rubin G.M."/>
            <person name="Venter J.C."/>
        </authorList>
    </citation>
    <scope>NUCLEOTIDE SEQUENCE [LARGE SCALE GENOMIC DNA]</scope>
    <source>
        <strain>Berkeley</strain>
    </source>
</reference>
<reference key="2">
    <citation type="journal article" date="2002" name="Genome Biol.">
        <title>Annotation of the Drosophila melanogaster euchromatic genome: a systematic review.</title>
        <authorList>
            <person name="Misra S."/>
            <person name="Crosby M.A."/>
            <person name="Mungall C.J."/>
            <person name="Matthews B.B."/>
            <person name="Campbell K.S."/>
            <person name="Hradecky P."/>
            <person name="Huang Y."/>
            <person name="Kaminker J.S."/>
            <person name="Millburn G.H."/>
            <person name="Prochnik S.E."/>
            <person name="Smith C.D."/>
            <person name="Tupy J.L."/>
            <person name="Whitfield E.J."/>
            <person name="Bayraktaroglu L."/>
            <person name="Berman B.P."/>
            <person name="Bettencourt B.R."/>
            <person name="Celniker S.E."/>
            <person name="de Grey A.D.N.J."/>
            <person name="Drysdale R.A."/>
            <person name="Harris N.L."/>
            <person name="Richter J."/>
            <person name="Russo S."/>
            <person name="Schroeder A.J."/>
            <person name="Shu S.Q."/>
            <person name="Stapleton M."/>
            <person name="Yamada C."/>
            <person name="Ashburner M."/>
            <person name="Gelbart W.M."/>
            <person name="Rubin G.M."/>
            <person name="Lewis S.E."/>
        </authorList>
    </citation>
    <scope>GENOME REANNOTATION</scope>
    <source>
        <strain>Berkeley</strain>
    </source>
</reference>
<reference key="3">
    <citation type="journal article" date="2002" name="Genome Biol.">
        <title>A Drosophila full-length cDNA resource.</title>
        <authorList>
            <person name="Stapleton M."/>
            <person name="Carlson J.W."/>
            <person name="Brokstein P."/>
            <person name="Yu C."/>
            <person name="Champe M."/>
            <person name="George R.A."/>
            <person name="Guarin H."/>
            <person name="Kronmiller B."/>
            <person name="Pacleb J.M."/>
            <person name="Park S."/>
            <person name="Wan K.H."/>
            <person name="Rubin G.M."/>
            <person name="Celniker S.E."/>
        </authorList>
    </citation>
    <scope>NUCLEOTIDE SEQUENCE [LARGE SCALE MRNA]</scope>
    <source>
        <strain>Berkeley</strain>
        <tissue>Ovary</tissue>
    </source>
</reference>
<accession>Q9VYH3</accession>
<accession>Q540X4</accession>
<comment type="function">
    <text evidence="1">Hydrolyzes dipeptides containing N-terminal aspartate residues.</text>
</comment>
<comment type="catalytic activity">
    <reaction>
        <text>Dipeptidase E catalyzes the hydrolysis of dipeptides Asp-|-Xaa. It does not act on peptides with N-terminal Glu, Asn or Gln, nor does it cleave isoaspartyl peptides.</text>
        <dbReference type="EC" id="3.4.13.21"/>
    </reaction>
</comment>
<comment type="subcellular location">
    <subcellularLocation>
        <location evidence="1">Cytoplasm</location>
    </subcellularLocation>
</comment>
<comment type="similarity">
    <text evidence="2">Belongs to the peptidase S51 family.</text>
</comment>
<keyword id="KW-0963">Cytoplasm</keyword>
<keyword id="KW-0224">Dipeptidase</keyword>
<keyword id="KW-0378">Hydrolase</keyword>
<keyword id="KW-0645">Protease</keyword>
<keyword id="KW-1185">Reference proteome</keyword>
<keyword id="KW-0720">Serine protease</keyword>
<feature type="chain" id="PRO_0000209965" description="Probable alpha-aspartyl dipeptidase">
    <location>
        <begin position="1"/>
        <end position="240"/>
    </location>
</feature>
<feature type="active site" description="Charge relay system" evidence="1">
    <location>
        <position position="125"/>
    </location>
</feature>
<feature type="active site" description="Charge relay system" evidence="1">
    <location>
        <position position="140"/>
    </location>
</feature>
<feature type="active site" description="Charge relay system" evidence="1">
    <location>
        <position position="162"/>
    </location>
</feature>
<protein>
    <recommendedName>
        <fullName>Probable alpha-aspartyl dipeptidase</fullName>
        <ecNumber>3.4.13.21</ecNumber>
    </recommendedName>
    <alternativeName>
        <fullName>Asp-specific dipeptidase</fullName>
        <shortName>Dipeptidase E</shortName>
    </alternativeName>
</protein>